<dbReference type="EC" id="2.7.7.-" evidence="1"/>
<dbReference type="EC" id="2.7.7.108" evidence="1"/>
<dbReference type="EMBL" id="CP001298">
    <property type="protein sequence ID" value="ACK86108.1"/>
    <property type="molecule type" value="Genomic_DNA"/>
</dbReference>
<dbReference type="RefSeq" id="WP_015952944.1">
    <property type="nucleotide sequence ID" value="NC_011757.1"/>
</dbReference>
<dbReference type="SMR" id="B7KWN1"/>
<dbReference type="KEGG" id="mch:Mchl_5348"/>
<dbReference type="HOGENOM" id="CLU_010245_4_1_5"/>
<dbReference type="Proteomes" id="UP000002385">
    <property type="component" value="Chromosome"/>
</dbReference>
<dbReference type="GO" id="GO:0070733">
    <property type="term" value="F:AMPylase activity"/>
    <property type="evidence" value="ECO:0007669"/>
    <property type="project" value="TreeGrafter"/>
</dbReference>
<dbReference type="GO" id="GO:0005524">
    <property type="term" value="F:ATP binding"/>
    <property type="evidence" value="ECO:0007669"/>
    <property type="project" value="UniProtKB-UniRule"/>
</dbReference>
<dbReference type="GO" id="GO:0000287">
    <property type="term" value="F:magnesium ion binding"/>
    <property type="evidence" value="ECO:0007669"/>
    <property type="project" value="UniProtKB-UniRule"/>
</dbReference>
<dbReference type="HAMAP" id="MF_00692">
    <property type="entry name" value="YdiU_SelO"/>
    <property type="match status" value="1"/>
</dbReference>
<dbReference type="InterPro" id="IPR011009">
    <property type="entry name" value="Kinase-like_dom_sf"/>
</dbReference>
<dbReference type="InterPro" id="IPR003846">
    <property type="entry name" value="SelO"/>
</dbReference>
<dbReference type="NCBIfam" id="NF000658">
    <property type="entry name" value="PRK00029.1"/>
    <property type="match status" value="1"/>
</dbReference>
<dbReference type="PANTHER" id="PTHR32057">
    <property type="entry name" value="PROTEIN ADENYLYLTRANSFERASE SELO, MITOCHONDRIAL"/>
    <property type="match status" value="1"/>
</dbReference>
<dbReference type="PANTHER" id="PTHR32057:SF14">
    <property type="entry name" value="PROTEIN ADENYLYLTRANSFERASE SELO, MITOCHONDRIAL"/>
    <property type="match status" value="1"/>
</dbReference>
<dbReference type="Pfam" id="PF02696">
    <property type="entry name" value="SelO"/>
    <property type="match status" value="1"/>
</dbReference>
<dbReference type="SUPFAM" id="SSF56112">
    <property type="entry name" value="Protein kinase-like (PK-like)"/>
    <property type="match status" value="1"/>
</dbReference>
<evidence type="ECO:0000255" key="1">
    <source>
        <dbReference type="HAMAP-Rule" id="MF_00692"/>
    </source>
</evidence>
<comment type="function">
    <text evidence="1">Nucleotidyltransferase involved in the post-translational modification of proteins. It can catalyze the addition of adenosine monophosphate (AMP) or uridine monophosphate (UMP) to a protein, resulting in modifications known as AMPylation and UMPylation.</text>
</comment>
<comment type="catalytic activity">
    <reaction evidence="1">
        <text>L-seryl-[protein] + ATP = 3-O-(5'-adenylyl)-L-seryl-[protein] + diphosphate</text>
        <dbReference type="Rhea" id="RHEA:58120"/>
        <dbReference type="Rhea" id="RHEA-COMP:9863"/>
        <dbReference type="Rhea" id="RHEA-COMP:15073"/>
        <dbReference type="ChEBI" id="CHEBI:29999"/>
        <dbReference type="ChEBI" id="CHEBI:30616"/>
        <dbReference type="ChEBI" id="CHEBI:33019"/>
        <dbReference type="ChEBI" id="CHEBI:142516"/>
        <dbReference type="EC" id="2.7.7.108"/>
    </reaction>
</comment>
<comment type="catalytic activity">
    <reaction evidence="1">
        <text>L-threonyl-[protein] + ATP = 3-O-(5'-adenylyl)-L-threonyl-[protein] + diphosphate</text>
        <dbReference type="Rhea" id="RHEA:54292"/>
        <dbReference type="Rhea" id="RHEA-COMP:11060"/>
        <dbReference type="Rhea" id="RHEA-COMP:13847"/>
        <dbReference type="ChEBI" id="CHEBI:30013"/>
        <dbReference type="ChEBI" id="CHEBI:30616"/>
        <dbReference type="ChEBI" id="CHEBI:33019"/>
        <dbReference type="ChEBI" id="CHEBI:138113"/>
        <dbReference type="EC" id="2.7.7.108"/>
    </reaction>
</comment>
<comment type="catalytic activity">
    <reaction evidence="1">
        <text>L-tyrosyl-[protein] + ATP = O-(5'-adenylyl)-L-tyrosyl-[protein] + diphosphate</text>
        <dbReference type="Rhea" id="RHEA:54288"/>
        <dbReference type="Rhea" id="RHEA-COMP:10136"/>
        <dbReference type="Rhea" id="RHEA-COMP:13846"/>
        <dbReference type="ChEBI" id="CHEBI:30616"/>
        <dbReference type="ChEBI" id="CHEBI:33019"/>
        <dbReference type="ChEBI" id="CHEBI:46858"/>
        <dbReference type="ChEBI" id="CHEBI:83624"/>
        <dbReference type="EC" id="2.7.7.108"/>
    </reaction>
</comment>
<comment type="catalytic activity">
    <reaction evidence="1">
        <text>L-histidyl-[protein] + UTP = N(tele)-(5'-uridylyl)-L-histidyl-[protein] + diphosphate</text>
        <dbReference type="Rhea" id="RHEA:83891"/>
        <dbReference type="Rhea" id="RHEA-COMP:9745"/>
        <dbReference type="Rhea" id="RHEA-COMP:20239"/>
        <dbReference type="ChEBI" id="CHEBI:29979"/>
        <dbReference type="ChEBI" id="CHEBI:33019"/>
        <dbReference type="ChEBI" id="CHEBI:46398"/>
        <dbReference type="ChEBI" id="CHEBI:233474"/>
    </reaction>
</comment>
<comment type="catalytic activity">
    <reaction evidence="1">
        <text>L-seryl-[protein] + UTP = O-(5'-uridylyl)-L-seryl-[protein] + diphosphate</text>
        <dbReference type="Rhea" id="RHEA:64604"/>
        <dbReference type="Rhea" id="RHEA-COMP:9863"/>
        <dbReference type="Rhea" id="RHEA-COMP:16635"/>
        <dbReference type="ChEBI" id="CHEBI:29999"/>
        <dbReference type="ChEBI" id="CHEBI:33019"/>
        <dbReference type="ChEBI" id="CHEBI:46398"/>
        <dbReference type="ChEBI" id="CHEBI:156051"/>
    </reaction>
</comment>
<comment type="catalytic activity">
    <reaction evidence="1">
        <text>L-tyrosyl-[protein] + UTP = O-(5'-uridylyl)-L-tyrosyl-[protein] + diphosphate</text>
        <dbReference type="Rhea" id="RHEA:83887"/>
        <dbReference type="Rhea" id="RHEA-COMP:10136"/>
        <dbReference type="Rhea" id="RHEA-COMP:20238"/>
        <dbReference type="ChEBI" id="CHEBI:33019"/>
        <dbReference type="ChEBI" id="CHEBI:46398"/>
        <dbReference type="ChEBI" id="CHEBI:46858"/>
        <dbReference type="ChEBI" id="CHEBI:90602"/>
    </reaction>
</comment>
<comment type="cofactor">
    <cofactor evidence="1">
        <name>Mg(2+)</name>
        <dbReference type="ChEBI" id="CHEBI:18420"/>
    </cofactor>
    <cofactor evidence="1">
        <name>Mn(2+)</name>
        <dbReference type="ChEBI" id="CHEBI:29035"/>
    </cofactor>
</comment>
<comment type="similarity">
    <text evidence="1">Belongs to the SELO family.</text>
</comment>
<keyword id="KW-0067">ATP-binding</keyword>
<keyword id="KW-0460">Magnesium</keyword>
<keyword id="KW-0464">Manganese</keyword>
<keyword id="KW-0479">Metal-binding</keyword>
<keyword id="KW-0547">Nucleotide-binding</keyword>
<keyword id="KW-0548">Nucleotidyltransferase</keyword>
<keyword id="KW-0808">Transferase</keyword>
<organism>
    <name type="scientific">Methylorubrum extorquens (strain CM4 / NCIMB 13688)</name>
    <name type="common">Methylobacterium extorquens</name>
    <dbReference type="NCBI Taxonomy" id="440085"/>
    <lineage>
        <taxon>Bacteria</taxon>
        <taxon>Pseudomonadati</taxon>
        <taxon>Pseudomonadota</taxon>
        <taxon>Alphaproteobacteria</taxon>
        <taxon>Hyphomicrobiales</taxon>
        <taxon>Methylobacteriaceae</taxon>
        <taxon>Methylorubrum</taxon>
    </lineage>
</organism>
<sequence>MTALFPFDNSYARLPSHFFGRVAPTAVEAPRLIRLNRALAVDLGLDPDRLESPEGVEVLAGQRVPEGAEPLAAAYAGHQFGQFVPQLGDGRAILLGEVVGRDGRRDIQLKGSGPTPFSRRGDGRAALGPVLREYLVSEAMHALGIPTTRALAAVTTGEQVIRETALPGAVLTRVASSHIRVGSFQFFAARGDVEGLRALADHAIARHDPEAARADNPYRALLDGVIRRQAALVARWLTVGFIHGVMNTDNMSIAGETIDYGPCAFLDTYDPATAFSSIDRHGRYAYGNQPRIALWNLTRLAEALLPLLSEDETQAVAEAEAALTGFAGQFEAAYHGGLNCKLGLATTRDGDPALAGDLLKTMAENEADFTLTFRRLGEAVPGPDGEPDPAAVEAVRSLFIDPTAYDRWAGGWRRRLKDEAGDAAARRQMMRAANPAFIPRNHRVEEMITAAVERQDFAPFETLLTVLARPYDDQPDFAQYAEPPEGGGRGYRTFCGT</sequence>
<feature type="chain" id="PRO_1000200063" description="Protein nucleotidyltransferase YdiU">
    <location>
        <begin position="1"/>
        <end position="497"/>
    </location>
</feature>
<feature type="active site" description="Proton acceptor" evidence="1">
    <location>
        <position position="249"/>
    </location>
</feature>
<feature type="binding site" evidence="1">
    <location>
        <position position="88"/>
    </location>
    <ligand>
        <name>ATP</name>
        <dbReference type="ChEBI" id="CHEBI:30616"/>
    </ligand>
</feature>
<feature type="binding site" evidence="1">
    <location>
        <position position="90"/>
    </location>
    <ligand>
        <name>ATP</name>
        <dbReference type="ChEBI" id="CHEBI:30616"/>
    </ligand>
</feature>
<feature type="binding site" evidence="1">
    <location>
        <position position="91"/>
    </location>
    <ligand>
        <name>ATP</name>
        <dbReference type="ChEBI" id="CHEBI:30616"/>
    </ligand>
</feature>
<feature type="binding site" evidence="1">
    <location>
        <position position="110"/>
    </location>
    <ligand>
        <name>ATP</name>
        <dbReference type="ChEBI" id="CHEBI:30616"/>
    </ligand>
</feature>
<feature type="binding site" evidence="1">
    <location>
        <position position="122"/>
    </location>
    <ligand>
        <name>ATP</name>
        <dbReference type="ChEBI" id="CHEBI:30616"/>
    </ligand>
</feature>
<feature type="binding site" evidence="1">
    <location>
        <position position="123"/>
    </location>
    <ligand>
        <name>ATP</name>
        <dbReference type="ChEBI" id="CHEBI:30616"/>
    </ligand>
</feature>
<feature type="binding site" evidence="1">
    <location>
        <position position="173"/>
    </location>
    <ligand>
        <name>ATP</name>
        <dbReference type="ChEBI" id="CHEBI:30616"/>
    </ligand>
</feature>
<feature type="binding site" evidence="1">
    <location>
        <position position="180"/>
    </location>
    <ligand>
        <name>ATP</name>
        <dbReference type="ChEBI" id="CHEBI:30616"/>
    </ligand>
</feature>
<feature type="binding site" evidence="1">
    <location>
        <position position="250"/>
    </location>
    <ligand>
        <name>Mg(2+)</name>
        <dbReference type="ChEBI" id="CHEBI:18420"/>
    </ligand>
</feature>
<feature type="binding site" evidence="1">
    <location>
        <position position="259"/>
    </location>
    <ligand>
        <name>ATP</name>
        <dbReference type="ChEBI" id="CHEBI:30616"/>
    </ligand>
</feature>
<feature type="binding site" evidence="1">
    <location>
        <position position="259"/>
    </location>
    <ligand>
        <name>Mg(2+)</name>
        <dbReference type="ChEBI" id="CHEBI:18420"/>
    </ligand>
</feature>
<reference key="1">
    <citation type="submission" date="2008-12" db="EMBL/GenBank/DDBJ databases">
        <title>Complete sequence of chromosome of Methylobacterium chloromethanicum CM4.</title>
        <authorList>
            <consortium name="US DOE Joint Genome Institute"/>
            <person name="Lucas S."/>
            <person name="Copeland A."/>
            <person name="Lapidus A."/>
            <person name="Glavina del Rio T."/>
            <person name="Dalin E."/>
            <person name="Tice H."/>
            <person name="Bruce D."/>
            <person name="Goodwin L."/>
            <person name="Pitluck S."/>
            <person name="Chertkov O."/>
            <person name="Brettin T."/>
            <person name="Detter J.C."/>
            <person name="Han C."/>
            <person name="Larimer F."/>
            <person name="Land M."/>
            <person name="Hauser L."/>
            <person name="Kyrpides N."/>
            <person name="Mikhailova N."/>
            <person name="Marx C."/>
            <person name="Richardson P."/>
        </authorList>
    </citation>
    <scope>NUCLEOTIDE SEQUENCE [LARGE SCALE GENOMIC DNA]</scope>
    <source>
        <strain>CM4 / NCIMB 13688</strain>
    </source>
</reference>
<gene>
    <name evidence="1" type="primary">ydiU</name>
    <name evidence="1" type="synonym">selO</name>
    <name type="ordered locus">Mchl_5348</name>
</gene>
<accession>B7KWN1</accession>
<protein>
    <recommendedName>
        <fullName evidence="1">Protein nucleotidyltransferase YdiU</fullName>
        <ecNumber evidence="1">2.7.7.-</ecNumber>
    </recommendedName>
    <alternativeName>
        <fullName evidence="1">Protein adenylyltransferase YdiU</fullName>
        <ecNumber evidence="1">2.7.7.108</ecNumber>
    </alternativeName>
    <alternativeName>
        <fullName evidence="1">Protein uridylyltransferase YdiU</fullName>
        <ecNumber evidence="1">2.7.7.-</ecNumber>
    </alternativeName>
</protein>
<proteinExistence type="inferred from homology"/>
<name>SELO_METC4</name>